<organism>
    <name type="scientific">Acanthamoeba polyphaga mimivirus</name>
    <name type="common">APMV</name>
    <dbReference type="NCBI Taxonomy" id="212035"/>
    <lineage>
        <taxon>Viruses</taxon>
        <taxon>Varidnaviria</taxon>
        <taxon>Bamfordvirae</taxon>
        <taxon>Nucleocytoviricota</taxon>
        <taxon>Megaviricetes</taxon>
        <taxon>Imitervirales</taxon>
        <taxon>Mimiviridae</taxon>
        <taxon>Megamimivirinae</taxon>
        <taxon>Mimivirus</taxon>
        <taxon>Mimivirus bradfordmassiliense</taxon>
    </lineage>
</organism>
<evidence type="ECO:0000255" key="1">
    <source>
        <dbReference type="PROSITE-ProRule" id="PRU00159"/>
    </source>
</evidence>
<evidence type="ECO:0000255" key="2">
    <source>
        <dbReference type="PROSITE-ProRule" id="PRU10027"/>
    </source>
</evidence>
<evidence type="ECO:0000256" key="3">
    <source>
        <dbReference type="SAM" id="MobiDB-lite"/>
    </source>
</evidence>
<evidence type="ECO:0000269" key="4">
    <source>
    </source>
</evidence>
<comment type="catalytic activity">
    <reaction>
        <text>L-seryl-[protein] + ATP = O-phospho-L-seryl-[protein] + ADP + H(+)</text>
        <dbReference type="Rhea" id="RHEA:17989"/>
        <dbReference type="Rhea" id="RHEA-COMP:9863"/>
        <dbReference type="Rhea" id="RHEA-COMP:11604"/>
        <dbReference type="ChEBI" id="CHEBI:15378"/>
        <dbReference type="ChEBI" id="CHEBI:29999"/>
        <dbReference type="ChEBI" id="CHEBI:30616"/>
        <dbReference type="ChEBI" id="CHEBI:83421"/>
        <dbReference type="ChEBI" id="CHEBI:456216"/>
        <dbReference type="EC" id="2.7.11.1"/>
    </reaction>
</comment>
<comment type="catalytic activity">
    <reaction>
        <text>L-threonyl-[protein] + ATP = O-phospho-L-threonyl-[protein] + ADP + H(+)</text>
        <dbReference type="Rhea" id="RHEA:46608"/>
        <dbReference type="Rhea" id="RHEA-COMP:11060"/>
        <dbReference type="Rhea" id="RHEA-COMP:11605"/>
        <dbReference type="ChEBI" id="CHEBI:15378"/>
        <dbReference type="ChEBI" id="CHEBI:30013"/>
        <dbReference type="ChEBI" id="CHEBI:30616"/>
        <dbReference type="ChEBI" id="CHEBI:61977"/>
        <dbReference type="ChEBI" id="CHEBI:456216"/>
        <dbReference type="EC" id="2.7.11.1"/>
    </reaction>
</comment>
<comment type="subcellular location">
    <subcellularLocation>
        <location evidence="4">Virion</location>
    </subcellularLocation>
</comment>
<comment type="similarity">
    <text evidence="1">Belongs to the protein kinase superfamily. Ser/Thr protein kinase family.</text>
</comment>
<sequence>MMNKKNNKYKSDSLDSKEDKVDLYQDAMISNLISVNNKSTSDSDAKKPTENRIELLKNAYKGGTLKPMIDFDDHNTETFMDKRITKNLLDARSLFLSMGVKLIYIKSGTTGHTFKAISRSNKNVVFAVKVCAYPKDDYGGIKSSSRPENVEIRMLKILSYFVVNRLTPHLVLPIGTFHTDIEKFINIPEGVIDLKDEKNDMYKKFIERYHDGEFEKFVSVLISEWCNGGDLLDYIRKNYDSMTLETWTVVIFQLLFTLALIHEKFPAFRHNDMKANNILVEKTDNKHEGPDKWYRYSLGSHVFIIPGIGIQIKIWDFDFASIDGIVENKKVNADWTKKINISKKKNMYYDMHYFFNTLISKRFFPQFYEGGVPQEIVDFVHRIVPEEFRNGSDNINKKGRILVDVEYTTPFKVIMTDPLFEKYRYNQYYFHPQRNMAPKKSILFQQGNGSKQPVPKKSTGQKPTKKV</sequence>
<organismHost>
    <name type="scientific">Acanthamoeba polyphaga</name>
    <name type="common">Amoeba</name>
    <dbReference type="NCBI Taxonomy" id="5757"/>
</organismHost>
<protein>
    <recommendedName>
        <fullName>Putative serine/threonine-protein kinase R400</fullName>
        <ecNumber>2.7.11.1</ecNumber>
    </recommendedName>
</protein>
<feature type="chain" id="PRO_0000247403" description="Putative serine/threonine-protein kinase R400">
    <location>
        <begin position="1"/>
        <end position="467"/>
    </location>
</feature>
<feature type="domain" description="Protein kinase" evidence="1">
    <location>
        <begin position="99"/>
        <end position="467"/>
    </location>
</feature>
<feature type="region of interest" description="Disordered" evidence="3">
    <location>
        <begin position="443"/>
        <end position="467"/>
    </location>
</feature>
<feature type="compositionally biased region" description="Polar residues" evidence="3">
    <location>
        <begin position="458"/>
        <end position="467"/>
    </location>
</feature>
<feature type="active site" description="Proton acceptor" evidence="1 2">
    <location>
        <position position="272"/>
    </location>
</feature>
<feature type="binding site" evidence="1">
    <location>
        <begin position="105"/>
        <end position="113"/>
    </location>
    <ligand>
        <name>ATP</name>
        <dbReference type="ChEBI" id="CHEBI:30616"/>
    </ligand>
</feature>
<feature type="binding site" evidence="1">
    <location>
        <position position="129"/>
    </location>
    <ligand>
        <name>ATP</name>
        <dbReference type="ChEBI" id="CHEBI:30616"/>
    </ligand>
</feature>
<accession>Q5UQJ6</accession>
<gene>
    <name type="ordered locus">MIMI_R400</name>
</gene>
<dbReference type="EC" id="2.7.11.1"/>
<dbReference type="EMBL" id="AY653733">
    <property type="protein sequence ID" value="AAV50669.1"/>
    <property type="molecule type" value="Genomic_DNA"/>
</dbReference>
<dbReference type="KEGG" id="vg:9925021"/>
<dbReference type="OrthoDB" id="5517at10239"/>
<dbReference type="Proteomes" id="UP000001134">
    <property type="component" value="Genome"/>
</dbReference>
<dbReference type="GO" id="GO:0044423">
    <property type="term" value="C:virion component"/>
    <property type="evidence" value="ECO:0007669"/>
    <property type="project" value="UniProtKB-KW"/>
</dbReference>
<dbReference type="GO" id="GO:0005524">
    <property type="term" value="F:ATP binding"/>
    <property type="evidence" value="ECO:0007669"/>
    <property type="project" value="UniProtKB-KW"/>
</dbReference>
<dbReference type="GO" id="GO:0106310">
    <property type="term" value="F:protein serine kinase activity"/>
    <property type="evidence" value="ECO:0007669"/>
    <property type="project" value="RHEA"/>
</dbReference>
<dbReference type="GO" id="GO:0004674">
    <property type="term" value="F:protein serine/threonine kinase activity"/>
    <property type="evidence" value="ECO:0007669"/>
    <property type="project" value="UniProtKB-KW"/>
</dbReference>
<dbReference type="GO" id="GO:0010506">
    <property type="term" value="P:regulation of autophagy"/>
    <property type="evidence" value="ECO:0007669"/>
    <property type="project" value="InterPro"/>
</dbReference>
<dbReference type="Gene3D" id="1.10.510.10">
    <property type="entry name" value="Transferase(Phosphotransferase) domain 1"/>
    <property type="match status" value="1"/>
</dbReference>
<dbReference type="InterPro" id="IPR045269">
    <property type="entry name" value="Atg1-like"/>
</dbReference>
<dbReference type="InterPro" id="IPR011009">
    <property type="entry name" value="Kinase-like_dom_sf"/>
</dbReference>
<dbReference type="InterPro" id="IPR000719">
    <property type="entry name" value="Prot_kinase_dom"/>
</dbReference>
<dbReference type="InterPro" id="IPR001245">
    <property type="entry name" value="Ser-Thr/Tyr_kinase_cat_dom"/>
</dbReference>
<dbReference type="InterPro" id="IPR008271">
    <property type="entry name" value="Ser/Thr_kinase_AS"/>
</dbReference>
<dbReference type="PANTHER" id="PTHR24348">
    <property type="entry name" value="SERINE/THREONINE-PROTEIN KINASE UNC-51-RELATED"/>
    <property type="match status" value="1"/>
</dbReference>
<dbReference type="PANTHER" id="PTHR24348:SF68">
    <property type="entry name" value="SERINE_THREONINE-PROTEIN KINASE ATG1C"/>
    <property type="match status" value="1"/>
</dbReference>
<dbReference type="Pfam" id="PF07714">
    <property type="entry name" value="PK_Tyr_Ser-Thr"/>
    <property type="match status" value="1"/>
</dbReference>
<dbReference type="SUPFAM" id="SSF56112">
    <property type="entry name" value="Protein kinase-like (PK-like)"/>
    <property type="match status" value="1"/>
</dbReference>
<dbReference type="PROSITE" id="PS50011">
    <property type="entry name" value="PROTEIN_KINASE_DOM"/>
    <property type="match status" value="1"/>
</dbReference>
<dbReference type="PROSITE" id="PS00108">
    <property type="entry name" value="PROTEIN_KINASE_ST"/>
    <property type="match status" value="1"/>
</dbReference>
<reference key="1">
    <citation type="journal article" date="2004" name="Science">
        <title>The 1.2-megabase genome sequence of Mimivirus.</title>
        <authorList>
            <person name="Raoult D."/>
            <person name="Audic S."/>
            <person name="Robert C."/>
            <person name="Abergel C."/>
            <person name="Renesto P."/>
            <person name="Ogata H."/>
            <person name="La Scola B."/>
            <person name="Susan M."/>
            <person name="Claverie J.-M."/>
        </authorList>
    </citation>
    <scope>NUCLEOTIDE SEQUENCE [LARGE SCALE GENOMIC DNA]</scope>
    <source>
        <strain>Rowbotham-Bradford</strain>
    </source>
</reference>
<reference key="2">
    <citation type="journal article" date="2006" name="J. Virol.">
        <title>Mimivirus giant particles incorporate a large fraction of anonymous and unique gene products.</title>
        <authorList>
            <person name="Renesto P."/>
            <person name="Abergel C."/>
            <person name="Decloquement P."/>
            <person name="Moinier D."/>
            <person name="Azza S."/>
            <person name="Ogata H."/>
            <person name="Fourquet P."/>
            <person name="Gorvel J.-P."/>
            <person name="Claverie J.-M."/>
            <person name="Raoult D."/>
        </authorList>
    </citation>
    <scope>IDENTIFICATION BY MASS SPECTROMETRY [LARGE SCALE ANALYSIS]</scope>
    <scope>SUBCELLULAR LOCATION</scope>
</reference>
<name>YR400_MIMIV</name>
<keyword id="KW-0067">ATP-binding</keyword>
<keyword id="KW-0418">Kinase</keyword>
<keyword id="KW-0547">Nucleotide-binding</keyword>
<keyword id="KW-1185">Reference proteome</keyword>
<keyword id="KW-0723">Serine/threonine-protein kinase</keyword>
<keyword id="KW-0808">Transferase</keyword>
<keyword id="KW-0946">Virion</keyword>
<proteinExistence type="evidence at protein level"/>